<proteinExistence type="inferred from homology"/>
<dbReference type="EC" id="6.3.4.20" evidence="1"/>
<dbReference type="EMBL" id="CP001083">
    <property type="protein sequence ID" value="ACQ52709.1"/>
    <property type="molecule type" value="Genomic_DNA"/>
</dbReference>
<dbReference type="RefSeq" id="WP_003360796.1">
    <property type="nucleotide sequence ID" value="NC_012658.1"/>
</dbReference>
<dbReference type="SMR" id="C3KVW4"/>
<dbReference type="KEGG" id="cbi:CLJ_B1667"/>
<dbReference type="HOGENOM" id="CLU_081854_0_0_9"/>
<dbReference type="UniPathway" id="UPA00391"/>
<dbReference type="Proteomes" id="UP000002333">
    <property type="component" value="Chromosome"/>
</dbReference>
<dbReference type="GO" id="GO:0005524">
    <property type="term" value="F:ATP binding"/>
    <property type="evidence" value="ECO:0007669"/>
    <property type="project" value="UniProtKB-UniRule"/>
</dbReference>
<dbReference type="GO" id="GO:0016879">
    <property type="term" value="F:ligase activity, forming carbon-nitrogen bonds"/>
    <property type="evidence" value="ECO:0007669"/>
    <property type="project" value="UniProtKB-UniRule"/>
</dbReference>
<dbReference type="GO" id="GO:0008270">
    <property type="term" value="F:zinc ion binding"/>
    <property type="evidence" value="ECO:0007669"/>
    <property type="project" value="UniProtKB-UniRule"/>
</dbReference>
<dbReference type="GO" id="GO:0008616">
    <property type="term" value="P:queuosine biosynthetic process"/>
    <property type="evidence" value="ECO:0007669"/>
    <property type="project" value="UniProtKB-UniRule"/>
</dbReference>
<dbReference type="CDD" id="cd01995">
    <property type="entry name" value="QueC-like"/>
    <property type="match status" value="1"/>
</dbReference>
<dbReference type="FunFam" id="3.40.50.620:FF:000017">
    <property type="entry name" value="7-cyano-7-deazaguanine synthase"/>
    <property type="match status" value="1"/>
</dbReference>
<dbReference type="Gene3D" id="3.40.50.620">
    <property type="entry name" value="HUPs"/>
    <property type="match status" value="1"/>
</dbReference>
<dbReference type="HAMAP" id="MF_01633">
    <property type="entry name" value="QueC"/>
    <property type="match status" value="1"/>
</dbReference>
<dbReference type="InterPro" id="IPR018317">
    <property type="entry name" value="QueC"/>
</dbReference>
<dbReference type="InterPro" id="IPR014729">
    <property type="entry name" value="Rossmann-like_a/b/a_fold"/>
</dbReference>
<dbReference type="NCBIfam" id="TIGR00364">
    <property type="entry name" value="7-cyano-7-deazaguanine synthase QueC"/>
    <property type="match status" value="1"/>
</dbReference>
<dbReference type="PANTHER" id="PTHR42914">
    <property type="entry name" value="7-CYANO-7-DEAZAGUANINE SYNTHASE"/>
    <property type="match status" value="1"/>
</dbReference>
<dbReference type="PANTHER" id="PTHR42914:SF1">
    <property type="entry name" value="7-CYANO-7-DEAZAGUANINE SYNTHASE"/>
    <property type="match status" value="1"/>
</dbReference>
<dbReference type="Pfam" id="PF06508">
    <property type="entry name" value="QueC"/>
    <property type="match status" value="1"/>
</dbReference>
<dbReference type="PIRSF" id="PIRSF006293">
    <property type="entry name" value="ExsB"/>
    <property type="match status" value="1"/>
</dbReference>
<dbReference type="SUPFAM" id="SSF52402">
    <property type="entry name" value="Adenine nucleotide alpha hydrolases-like"/>
    <property type="match status" value="1"/>
</dbReference>
<comment type="function">
    <text evidence="1">Catalyzes the ATP-dependent conversion of 7-carboxy-7-deazaguanine (CDG) to 7-cyano-7-deazaguanine (preQ(0)).</text>
</comment>
<comment type="catalytic activity">
    <reaction evidence="1">
        <text>7-carboxy-7-deazaguanine + NH4(+) + ATP = 7-cyano-7-deazaguanine + ADP + phosphate + H2O + H(+)</text>
        <dbReference type="Rhea" id="RHEA:27982"/>
        <dbReference type="ChEBI" id="CHEBI:15377"/>
        <dbReference type="ChEBI" id="CHEBI:15378"/>
        <dbReference type="ChEBI" id="CHEBI:28938"/>
        <dbReference type="ChEBI" id="CHEBI:30616"/>
        <dbReference type="ChEBI" id="CHEBI:43474"/>
        <dbReference type="ChEBI" id="CHEBI:45075"/>
        <dbReference type="ChEBI" id="CHEBI:61036"/>
        <dbReference type="ChEBI" id="CHEBI:456216"/>
        <dbReference type="EC" id="6.3.4.20"/>
    </reaction>
</comment>
<comment type="cofactor">
    <cofactor evidence="1">
        <name>Zn(2+)</name>
        <dbReference type="ChEBI" id="CHEBI:29105"/>
    </cofactor>
    <text evidence="1">Binds 1 zinc ion per subunit.</text>
</comment>
<comment type="pathway">
    <text evidence="1">Purine metabolism; 7-cyano-7-deazaguanine biosynthesis.</text>
</comment>
<comment type="subunit">
    <text evidence="1">Homodimer.</text>
</comment>
<comment type="similarity">
    <text evidence="1">Belongs to the QueC family.</text>
</comment>
<feature type="chain" id="PRO_1000215787" description="7-cyano-7-deazaguanine synthase">
    <location>
        <begin position="1"/>
        <end position="219"/>
    </location>
</feature>
<feature type="binding site" evidence="1">
    <location>
        <begin position="10"/>
        <end position="20"/>
    </location>
    <ligand>
        <name>ATP</name>
        <dbReference type="ChEBI" id="CHEBI:30616"/>
    </ligand>
</feature>
<feature type="binding site" evidence="1">
    <location>
        <position position="188"/>
    </location>
    <ligand>
        <name>Zn(2+)</name>
        <dbReference type="ChEBI" id="CHEBI:29105"/>
    </ligand>
</feature>
<feature type="binding site" evidence="1">
    <location>
        <position position="197"/>
    </location>
    <ligand>
        <name>Zn(2+)</name>
        <dbReference type="ChEBI" id="CHEBI:29105"/>
    </ligand>
</feature>
<feature type="binding site" evidence="1">
    <location>
        <position position="200"/>
    </location>
    <ligand>
        <name>Zn(2+)</name>
        <dbReference type="ChEBI" id="CHEBI:29105"/>
    </ligand>
</feature>
<feature type="binding site" evidence="1">
    <location>
        <position position="203"/>
    </location>
    <ligand>
        <name>Zn(2+)</name>
        <dbReference type="ChEBI" id="CHEBI:29105"/>
    </ligand>
</feature>
<reference key="1">
    <citation type="submission" date="2008-05" db="EMBL/GenBank/DDBJ databases">
        <title>Genome sequence of Clostridium botulinum Ba4 strain 657.</title>
        <authorList>
            <person name="Shrivastava S."/>
            <person name="Brown J.L."/>
            <person name="Bruce D."/>
            <person name="Detter C."/>
            <person name="Munk C."/>
            <person name="Smith L.A."/>
            <person name="Smith T.J."/>
            <person name="Sutton G."/>
            <person name="Brettin T.S."/>
        </authorList>
    </citation>
    <scope>NUCLEOTIDE SEQUENCE [LARGE SCALE GENOMIC DNA]</scope>
    <source>
        <strain>657 / Type Ba4</strain>
    </source>
</reference>
<accession>C3KVW4</accession>
<name>QUEC_CLOB6</name>
<protein>
    <recommendedName>
        <fullName evidence="1">7-cyano-7-deazaguanine synthase</fullName>
        <ecNumber evidence="1">6.3.4.20</ecNumber>
    </recommendedName>
    <alternativeName>
        <fullName evidence="1">7-cyano-7-carbaguanine synthase</fullName>
    </alternativeName>
    <alternativeName>
        <fullName evidence="1">PreQ(0) synthase</fullName>
    </alternativeName>
    <alternativeName>
        <fullName evidence="1">Queuosine biosynthesis protein QueC</fullName>
    </alternativeName>
</protein>
<sequence>MNKEKAIVVFSGGQDSTTCLFWAKKKYKEVIAVSFDYNQKHKLELECAKDICKKYNIEHKILDLNLLNQLAPNSLTRQDITVDKSAPKEGVPNSFVDGRNLLFLSFVAVFAKQRGINAIITGVSQSDFSGYPDCRDVFIKSLNVTLNLAMDYEFEILTPLMWINKAETWKMAYDLGVLDIVKEETLTCYNGIKADGCGECPACKLRKKGYLEFEKEYLK</sequence>
<keyword id="KW-0067">ATP-binding</keyword>
<keyword id="KW-0436">Ligase</keyword>
<keyword id="KW-0479">Metal-binding</keyword>
<keyword id="KW-0547">Nucleotide-binding</keyword>
<keyword id="KW-0671">Queuosine biosynthesis</keyword>
<keyword id="KW-0862">Zinc</keyword>
<evidence type="ECO:0000255" key="1">
    <source>
        <dbReference type="HAMAP-Rule" id="MF_01633"/>
    </source>
</evidence>
<gene>
    <name evidence="1" type="primary">queC</name>
    <name type="ordered locus">CLJ_B1667</name>
</gene>
<organism>
    <name type="scientific">Clostridium botulinum (strain 657 / Type Ba4)</name>
    <dbReference type="NCBI Taxonomy" id="515621"/>
    <lineage>
        <taxon>Bacteria</taxon>
        <taxon>Bacillati</taxon>
        <taxon>Bacillota</taxon>
        <taxon>Clostridia</taxon>
        <taxon>Eubacteriales</taxon>
        <taxon>Clostridiaceae</taxon>
        <taxon>Clostridium</taxon>
    </lineage>
</organism>